<organism evidence="8">
    <name type="scientific">Pinus banksiana</name>
    <name type="common">Jack pine</name>
    <name type="synonym">Pinus divaricata</name>
    <dbReference type="NCBI Taxonomy" id="3353"/>
    <lineage>
        <taxon>Eukaryota</taxon>
        <taxon>Viridiplantae</taxon>
        <taxon>Streptophyta</taxon>
        <taxon>Embryophyta</taxon>
        <taxon>Tracheophyta</taxon>
        <taxon>Spermatophyta</taxon>
        <taxon>Pinopsida</taxon>
        <taxon>Pinidae</taxon>
        <taxon>Conifers I</taxon>
        <taxon>Pinales</taxon>
        <taxon>Pinaceae</taxon>
        <taxon>Pinus</taxon>
        <taxon>Pinus subgen. Pinus</taxon>
    </lineage>
</organism>
<name>TPSD1_PINBN</name>
<reference key="1">
    <citation type="journal article" date="2013" name="Plant Physiol.">
        <title>Evolution of conifer diterpene synthases: diterpene resin acid biosynthesis in lodgepole pine and jack pine involves monofunctional and bifunctional diterpene synthases.</title>
        <authorList>
            <person name="Hall D.E."/>
            <person name="Zerbe P."/>
            <person name="Jancsik S."/>
            <person name="Quesada A.L."/>
            <person name="Dullat H."/>
            <person name="Madilao L.L."/>
            <person name="Yuen M."/>
            <person name="Bohlmann J."/>
        </authorList>
    </citation>
    <scope>NUCLEOTIDE SEQUENCE [MRNA]</scope>
    <scope>FUNCTION</scope>
    <scope>CATALYTIC ACTIVITY</scope>
    <scope>3D-STRUCTURE MODELING</scope>
</reference>
<evidence type="ECO:0000250" key="1">
    <source>
        <dbReference type="UniProtKB" id="C7BKP9"/>
    </source>
</evidence>
<evidence type="ECO:0000250" key="2">
    <source>
        <dbReference type="UniProtKB" id="Q38802"/>
    </source>
</evidence>
<evidence type="ECO:0000250" key="3">
    <source>
        <dbReference type="UniProtKB" id="Q40577"/>
    </source>
</evidence>
<evidence type="ECO:0000255" key="4"/>
<evidence type="ECO:0000269" key="5">
    <source>
    </source>
</evidence>
<evidence type="ECO:0000303" key="6">
    <source>
    </source>
</evidence>
<evidence type="ECO:0000305" key="7"/>
<evidence type="ECO:0000312" key="8">
    <source>
        <dbReference type="EMBL" id="AFU73864.1"/>
    </source>
</evidence>
<gene>
    <name evidence="6" type="primary">TPS-LAS1</name>
</gene>
<keyword id="KW-0150">Chloroplast</keyword>
<keyword id="KW-0413">Isomerase</keyword>
<keyword id="KW-0456">Lyase</keyword>
<keyword id="KW-0460">Magnesium</keyword>
<keyword id="KW-0479">Metal-binding</keyword>
<keyword id="KW-0511">Multifunctional enzyme</keyword>
<keyword id="KW-0611">Plant defense</keyword>
<keyword id="KW-0934">Plastid</keyword>
<keyword id="KW-0809">Transit peptide</keyword>
<comment type="function">
    <text evidence="5">Involved in defensive oleoresin formation in conifers in response to insect attack or other injury. Involved in diterpene (C20) olefins biosynthesis. Bifunctional enzyme that catalyzes two sequential cyclizations of geranylgeranyl diphosphate (GGPP) to levopimaradiene. Levopimaradiene is the major products of the enzyme with abietadiene and neoabietadiene. No activity with farnesyl diphosphate (FPP) as substrate.</text>
</comment>
<comment type="catalytic activity">
    <reaction evidence="5">
        <text>(2E,6E,10E)-geranylgeranyl diphosphate = (+)-copalyl diphosphate</text>
        <dbReference type="Rhea" id="RHEA:24316"/>
        <dbReference type="ChEBI" id="CHEBI:58635"/>
        <dbReference type="ChEBI" id="CHEBI:58756"/>
        <dbReference type="EC" id="5.5.1.12"/>
    </reaction>
</comment>
<comment type="catalytic activity">
    <reaction evidence="5">
        <text>(+)-copalyl diphosphate = abieta-7,13-diene + diphosphate</text>
        <dbReference type="Rhea" id="RHEA:13873"/>
        <dbReference type="ChEBI" id="CHEBI:30232"/>
        <dbReference type="ChEBI" id="CHEBI:33019"/>
        <dbReference type="ChEBI" id="CHEBI:58635"/>
        <dbReference type="EC" id="4.2.3.18"/>
    </reaction>
</comment>
<comment type="catalytic activity">
    <reaction evidence="5">
        <text>(+)-copalyl diphosphate = abieta-8(14),12-diene + diphosphate</text>
        <dbReference type="Rhea" id="RHEA:25548"/>
        <dbReference type="ChEBI" id="CHEBI:29616"/>
        <dbReference type="ChEBI" id="CHEBI:33019"/>
        <dbReference type="ChEBI" id="CHEBI:58635"/>
        <dbReference type="EC" id="4.2.3.32"/>
    </reaction>
</comment>
<comment type="catalytic activity">
    <reaction evidence="5">
        <text>(+)-copalyl diphosphate = neoabietadiene + diphosphate</text>
        <dbReference type="Rhea" id="RHEA:33987"/>
        <dbReference type="ChEBI" id="CHEBI:29651"/>
        <dbReference type="ChEBI" id="CHEBI:33019"/>
        <dbReference type="ChEBI" id="CHEBI:58635"/>
        <dbReference type="EC" id="4.2.3.132"/>
    </reaction>
</comment>
<comment type="cofactor">
    <cofactor evidence="3">
        <name>Mg(2+)</name>
        <dbReference type="ChEBI" id="CHEBI:18420"/>
    </cofactor>
    <text evidence="3">Binds 3 Mg(2+) ions per subunit.</text>
</comment>
<comment type="pathway">
    <text evidence="7">Terpene metabolism; oleoresin biosynthesis.</text>
</comment>
<comment type="subcellular location">
    <subcellularLocation>
        <location evidence="4">Plastid</location>
        <location evidence="4">Chloroplast</location>
    </subcellularLocation>
</comment>
<comment type="domain">
    <text evidence="7">The Asp-Xaa-Asp-Asp (DXDD) motif is important for the catalytic activity in the class II active site relevant for the cyclization of GGPP. The Asp-Asp-Xaa-Xaa-Asp/Glu (DDXXD/E) motif is important for the catalytic activity in the class I active site, presumably through binding to Mg(2+).</text>
</comment>
<comment type="similarity">
    <text evidence="7">Belongs to the terpene synthase family. Tpsd subfamily.</text>
</comment>
<protein>
    <recommendedName>
        <fullName evidence="6">Bifunctional levopimaradiene synthase, chloroplastic</fullName>
        <shortName evidence="6">PbLAS1</shortName>
    </recommendedName>
    <alternativeName>
        <fullName>Diterpene synthase</fullName>
    </alternativeName>
    <domain>
        <recommendedName>
            <fullName>Levopimaradiene synthase</fullName>
            <ecNumber evidence="5">4.2.3.32</ecNumber>
        </recommendedName>
        <alternativeName>
            <fullName>Abieta-7,13-diene synthase</fullName>
            <ecNumber evidence="5">4.2.3.18</ecNumber>
        </alternativeName>
        <alternativeName>
            <fullName>Neoabietadiene synthase</fullName>
            <ecNumber evidence="5">4.2.3.132</ecNumber>
        </alternativeName>
    </domain>
    <domain>
        <recommendedName>
            <fullName>Copalyl diphosphate synthase</fullName>
            <ecNumber evidence="5">5.5.1.12</ecNumber>
        </recommendedName>
    </domain>
</protein>
<dbReference type="EC" id="4.2.3.32" evidence="5"/>
<dbReference type="EC" id="4.2.3.18" evidence="5"/>
<dbReference type="EC" id="4.2.3.132" evidence="5"/>
<dbReference type="EC" id="5.5.1.12" evidence="5"/>
<dbReference type="EMBL" id="JQ240312">
    <property type="protein sequence ID" value="AFU73864.1"/>
    <property type="molecule type" value="mRNA"/>
</dbReference>
<dbReference type="SMR" id="M4HXU6"/>
<dbReference type="BRENDA" id="5.5.1.12">
    <property type="organism ID" value="4842"/>
</dbReference>
<dbReference type="UniPathway" id="UPA00924"/>
<dbReference type="GO" id="GO:0009507">
    <property type="term" value="C:chloroplast"/>
    <property type="evidence" value="ECO:0007669"/>
    <property type="project" value="UniProtKB-SubCell"/>
</dbReference>
<dbReference type="GO" id="GO:0050554">
    <property type="term" value="F:abietadiene synthase activity"/>
    <property type="evidence" value="ECO:0007669"/>
    <property type="project" value="UniProtKB-EC"/>
</dbReference>
<dbReference type="GO" id="GO:0050559">
    <property type="term" value="F:copalyl diphosphate synthase activity"/>
    <property type="evidence" value="ECO:0007669"/>
    <property type="project" value="UniProtKB-EC"/>
</dbReference>
<dbReference type="GO" id="GO:0052678">
    <property type="term" value="F:levopimaradiene synthase activity"/>
    <property type="evidence" value="ECO:0007669"/>
    <property type="project" value="UniProtKB-EC"/>
</dbReference>
<dbReference type="GO" id="GO:0000287">
    <property type="term" value="F:magnesium ion binding"/>
    <property type="evidence" value="ECO:0007669"/>
    <property type="project" value="InterPro"/>
</dbReference>
<dbReference type="GO" id="GO:0010333">
    <property type="term" value="F:terpene synthase activity"/>
    <property type="evidence" value="ECO:0007669"/>
    <property type="project" value="InterPro"/>
</dbReference>
<dbReference type="GO" id="GO:0006952">
    <property type="term" value="P:defense response"/>
    <property type="evidence" value="ECO:0007669"/>
    <property type="project" value="UniProtKB-KW"/>
</dbReference>
<dbReference type="GO" id="GO:0016102">
    <property type="term" value="P:diterpenoid biosynthetic process"/>
    <property type="evidence" value="ECO:0007669"/>
    <property type="project" value="InterPro"/>
</dbReference>
<dbReference type="CDD" id="cd00684">
    <property type="entry name" value="Terpene_cyclase_plant_C1"/>
    <property type="match status" value="1"/>
</dbReference>
<dbReference type="FunFam" id="1.50.10.130:FF:000002">
    <property type="entry name" value="Ent-copalyl diphosphate synthase, chloroplastic"/>
    <property type="match status" value="1"/>
</dbReference>
<dbReference type="FunFam" id="1.10.600.10:FF:000005">
    <property type="entry name" value="Ent-kaur-16-ene synthase, chloroplastic"/>
    <property type="match status" value="1"/>
</dbReference>
<dbReference type="Gene3D" id="1.50.10.160">
    <property type="match status" value="1"/>
</dbReference>
<dbReference type="Gene3D" id="1.10.600.10">
    <property type="entry name" value="Farnesyl Diphosphate Synthase"/>
    <property type="match status" value="1"/>
</dbReference>
<dbReference type="Gene3D" id="1.50.10.130">
    <property type="entry name" value="Terpene synthase, N-terminal domain"/>
    <property type="match status" value="1"/>
</dbReference>
<dbReference type="InterPro" id="IPR008949">
    <property type="entry name" value="Isoprenoid_synthase_dom_sf"/>
</dbReference>
<dbReference type="InterPro" id="IPR034741">
    <property type="entry name" value="Terpene_cyclase-like_1_C"/>
</dbReference>
<dbReference type="InterPro" id="IPR044814">
    <property type="entry name" value="Terpene_cyclase_plant_C1"/>
</dbReference>
<dbReference type="InterPro" id="IPR001906">
    <property type="entry name" value="Terpene_synth_N"/>
</dbReference>
<dbReference type="InterPro" id="IPR036965">
    <property type="entry name" value="Terpene_synth_N_sf"/>
</dbReference>
<dbReference type="InterPro" id="IPR050148">
    <property type="entry name" value="Terpene_synthase-like"/>
</dbReference>
<dbReference type="InterPro" id="IPR005630">
    <property type="entry name" value="Terpene_synthase_metal-bd"/>
</dbReference>
<dbReference type="InterPro" id="IPR008930">
    <property type="entry name" value="Terpenoid_cyclase/PrenylTrfase"/>
</dbReference>
<dbReference type="PANTHER" id="PTHR31739:SF25">
    <property type="entry name" value="(E,E)-GERANYLLINALOOL SYNTHASE"/>
    <property type="match status" value="1"/>
</dbReference>
<dbReference type="PANTHER" id="PTHR31739">
    <property type="entry name" value="ENT-COPALYL DIPHOSPHATE SYNTHASE, CHLOROPLASTIC"/>
    <property type="match status" value="1"/>
</dbReference>
<dbReference type="Pfam" id="PF01397">
    <property type="entry name" value="Terpene_synth"/>
    <property type="match status" value="1"/>
</dbReference>
<dbReference type="Pfam" id="PF03936">
    <property type="entry name" value="Terpene_synth_C"/>
    <property type="match status" value="1"/>
</dbReference>
<dbReference type="SFLD" id="SFLDS00005">
    <property type="entry name" value="Isoprenoid_Synthase_Type_I"/>
    <property type="match status" value="1"/>
</dbReference>
<dbReference type="SFLD" id="SFLDG01019">
    <property type="entry name" value="Terpene_Cyclase_Like_1_C_Termi"/>
    <property type="match status" value="1"/>
</dbReference>
<dbReference type="SFLD" id="SFLDG01014">
    <property type="entry name" value="Terpene_Cyclase_Like_1_N-term"/>
    <property type="match status" value="1"/>
</dbReference>
<dbReference type="SFLD" id="SFLDG01605">
    <property type="entry name" value="Terpene_Cyclase_Like_1_N-term"/>
    <property type="match status" value="1"/>
</dbReference>
<dbReference type="SUPFAM" id="SSF48239">
    <property type="entry name" value="Terpenoid cyclases/Protein prenyltransferases"/>
    <property type="match status" value="2"/>
</dbReference>
<dbReference type="SUPFAM" id="SSF48576">
    <property type="entry name" value="Terpenoid synthases"/>
    <property type="match status" value="1"/>
</dbReference>
<feature type="transit peptide" description="Chloroplast" evidence="4">
    <location>
        <begin position="1"/>
        <end position="33"/>
    </location>
</feature>
<feature type="chain" id="PRO_0000431418" description="Bifunctional levopimaradiene synthase, chloroplastic">
    <location>
        <begin position="34"/>
        <end position="857"/>
    </location>
</feature>
<feature type="short sequence motif" description="DXDD motif" evidence="7">
    <location>
        <begin position="390"/>
        <end position="393"/>
    </location>
</feature>
<feature type="short sequence motif" description="DDXXD motif" evidence="7">
    <location>
        <begin position="609"/>
        <end position="613"/>
    </location>
</feature>
<feature type="binding site" evidence="2">
    <location>
        <position position="257"/>
    </location>
    <ligand>
        <name>substrate</name>
    </ligand>
</feature>
<feature type="binding site" evidence="1">
    <location>
        <position position="390"/>
    </location>
    <ligand>
        <name>Mg(2+)</name>
        <dbReference type="ChEBI" id="CHEBI:18420"/>
        <label>4</label>
    </ligand>
</feature>
<feature type="binding site" evidence="1">
    <location>
        <position position="392"/>
    </location>
    <ligand>
        <name>Mg(2+)</name>
        <dbReference type="ChEBI" id="CHEBI:18420"/>
        <label>4</label>
    </ligand>
</feature>
<feature type="binding site" evidence="2">
    <location>
        <position position="477"/>
    </location>
    <ligand>
        <name>substrate</name>
    </ligand>
</feature>
<feature type="binding site" evidence="3">
    <location>
        <position position="609"/>
    </location>
    <ligand>
        <name>Mg(2+)</name>
        <dbReference type="ChEBI" id="CHEBI:18420"/>
        <label>1</label>
    </ligand>
</feature>
<feature type="binding site" evidence="3">
    <location>
        <position position="609"/>
    </location>
    <ligand>
        <name>Mg(2+)</name>
        <dbReference type="ChEBI" id="CHEBI:18420"/>
        <label>2</label>
    </ligand>
</feature>
<feature type="binding site" evidence="3">
    <location>
        <position position="613"/>
    </location>
    <ligand>
        <name>Mg(2+)</name>
        <dbReference type="ChEBI" id="CHEBI:18420"/>
        <label>1</label>
    </ligand>
</feature>
<feature type="binding site" evidence="3">
    <location>
        <position position="613"/>
    </location>
    <ligand>
        <name>Mg(2+)</name>
        <dbReference type="ChEBI" id="CHEBI:18420"/>
        <label>2</label>
    </ligand>
</feature>
<feature type="binding site" evidence="3">
    <location>
        <position position="753"/>
    </location>
    <ligand>
        <name>Mg(2+)</name>
        <dbReference type="ChEBI" id="CHEBI:18420"/>
        <label>3</label>
    </ligand>
</feature>
<feature type="binding site" evidence="3">
    <location>
        <position position="757"/>
    </location>
    <ligand>
        <name>Mg(2+)</name>
        <dbReference type="ChEBI" id="CHEBI:18420"/>
        <label>3</label>
    </ligand>
</feature>
<feature type="binding site" evidence="3">
    <location>
        <position position="761"/>
    </location>
    <ligand>
        <name>Mg(2+)</name>
        <dbReference type="ChEBI" id="CHEBI:18420"/>
        <label>3</label>
    </ligand>
</feature>
<sequence length="857" mass="98479">MALPSSSLSSQIHTGATTQCIPHFHGSLNAGTSAGKRRSLYLRWGKDNQAKKFGPSKIVACAGQDPFSVPTLVKREFPPGFWKDHVIESLMPSYKVAPSDEKRIETLITEIKNMFRSMGYGETNPSAYDTAWVARIPAVDGSEKPQFPETLEWILQNQLKDGSWGEEFYFLAYDRILATLACIITLTIWQTGDTQVQKGIEFFKTQAGKIEEEADSHRPSGFEIVFPAMLKEAKALGLDLPYELPFIQQIIEKREAKLQRLPPDLLYALPTTLLYSLEGLQEIVDWEKIMKLQSKDGSFLSSPASTAAVFMRTGNKKCLEFLNFVLKKFGNHVPCHYPLDLFERLWAVDTVERLGIDHHFKEEIKDALDYVYSHWDERGIGWARENPVPDIDDTAMGLRILRLHGYNVSSDVLKTFRDENGEFFCFLGQTQRGVTDMLNVNRCSHVAFPGETIMEEAKLCTERYLRNALEDTGAFDKWALKKNIRGEVEYALKYPWHRSMPRLEARSYIENYGPNDVWLGKTMYMMPNISNEKYLELAKLDFNRVQFFHRQELQDIRRWWNSSGFSQLGFTRERVAEIYFSPASFLFEPEFATCRAVYTKTSNFTVILDDLYDAHGTLDNLKLFSESVKRWDLSLVDQMPQDMKICFKGFYNTFNEIAEEGRKRQGRDVLSYIQKVWEVQLEAYTKEAEWSAVRYVPSYDEYIGNASVSIALGTVVLISALFTGEILTDDILSKIGRDSRFLYLMGLTGRLVNDTKTYQAERGQGEVASAVQCYMKDHPEISEEEALKHVYTIMDNALDELNREFVNNRDVPDTCRRLVFETARIMQLFYMDGDGLTLSHNMEIKEHVKNCLFQPVA</sequence>
<accession>M4HXU6</accession>
<proteinExistence type="evidence at protein level"/>